<dbReference type="EC" id="5.3.1.17" evidence="1"/>
<dbReference type="EMBL" id="CP000247">
    <property type="protein sequence ID" value="ABG70840.1"/>
    <property type="molecule type" value="Genomic_DNA"/>
</dbReference>
<dbReference type="RefSeq" id="WP_000383248.1">
    <property type="nucleotide sequence ID" value="NC_008253.1"/>
</dbReference>
<dbReference type="SMR" id="Q0TDY9"/>
<dbReference type="GeneID" id="75172927"/>
<dbReference type="KEGG" id="ecp:ECP_2856"/>
<dbReference type="HOGENOM" id="CLU_062609_0_0_6"/>
<dbReference type="UniPathway" id="UPA00545">
    <property type="reaction ID" value="UER00826"/>
</dbReference>
<dbReference type="Proteomes" id="UP000009182">
    <property type="component" value="Chromosome"/>
</dbReference>
<dbReference type="GO" id="GO:0008697">
    <property type="term" value="F:4-deoxy-L-threo-5-hexosulose-uronate ketol-isomerase activity"/>
    <property type="evidence" value="ECO:0007669"/>
    <property type="project" value="UniProtKB-UniRule"/>
</dbReference>
<dbReference type="GO" id="GO:0008270">
    <property type="term" value="F:zinc ion binding"/>
    <property type="evidence" value="ECO:0007669"/>
    <property type="project" value="UniProtKB-UniRule"/>
</dbReference>
<dbReference type="GO" id="GO:0019698">
    <property type="term" value="P:D-galacturonate catabolic process"/>
    <property type="evidence" value="ECO:0007669"/>
    <property type="project" value="TreeGrafter"/>
</dbReference>
<dbReference type="GO" id="GO:0042840">
    <property type="term" value="P:D-glucuronate catabolic process"/>
    <property type="evidence" value="ECO:0007669"/>
    <property type="project" value="TreeGrafter"/>
</dbReference>
<dbReference type="GO" id="GO:0045490">
    <property type="term" value="P:pectin catabolic process"/>
    <property type="evidence" value="ECO:0007669"/>
    <property type="project" value="UniProtKB-UniRule"/>
</dbReference>
<dbReference type="CDD" id="cd20491">
    <property type="entry name" value="cupin_KduI_C"/>
    <property type="match status" value="1"/>
</dbReference>
<dbReference type="CDD" id="cd20294">
    <property type="entry name" value="cupin_KduI_N"/>
    <property type="match status" value="1"/>
</dbReference>
<dbReference type="FunFam" id="2.60.120.10:FF:000018">
    <property type="entry name" value="4-deoxy-L-threo-5-hexosulose-uronate ketol-isomerase"/>
    <property type="match status" value="1"/>
</dbReference>
<dbReference type="FunFam" id="2.60.120.520:FF:000001">
    <property type="entry name" value="4-deoxy-L-threo-5-hexosulose-uronate ketol-isomerase"/>
    <property type="match status" value="1"/>
</dbReference>
<dbReference type="Gene3D" id="2.60.120.10">
    <property type="entry name" value="Jelly Rolls"/>
    <property type="match status" value="1"/>
</dbReference>
<dbReference type="Gene3D" id="2.60.120.520">
    <property type="entry name" value="pectin degrading enzyme 5-keto 4- deoxyuronate isomerase, domain 1"/>
    <property type="match status" value="1"/>
</dbReference>
<dbReference type="HAMAP" id="MF_00687">
    <property type="entry name" value="KduI"/>
    <property type="match status" value="1"/>
</dbReference>
<dbReference type="InterPro" id="IPR007045">
    <property type="entry name" value="KduI"/>
</dbReference>
<dbReference type="InterPro" id="IPR021120">
    <property type="entry name" value="KduI/IolB_isomerase"/>
</dbReference>
<dbReference type="InterPro" id="IPR027449">
    <property type="entry name" value="KduI_N"/>
</dbReference>
<dbReference type="InterPro" id="IPR014710">
    <property type="entry name" value="RmlC-like_jellyroll"/>
</dbReference>
<dbReference type="InterPro" id="IPR011051">
    <property type="entry name" value="RmlC_Cupin_sf"/>
</dbReference>
<dbReference type="NCBIfam" id="NF002091">
    <property type="entry name" value="PRK00924.1"/>
    <property type="match status" value="1"/>
</dbReference>
<dbReference type="PANTHER" id="PTHR38461">
    <property type="entry name" value="4-DEOXY-L-THREO-5-HEXOSULOSE-URONATE KETOL-ISOMERASE"/>
    <property type="match status" value="1"/>
</dbReference>
<dbReference type="PANTHER" id="PTHR38461:SF1">
    <property type="entry name" value="4-DEOXY-L-THREO-5-HEXOSULOSE-URONATE KETOL-ISOMERASE"/>
    <property type="match status" value="1"/>
</dbReference>
<dbReference type="Pfam" id="PF04962">
    <property type="entry name" value="KduI"/>
    <property type="match status" value="1"/>
</dbReference>
<dbReference type="PIRSF" id="PIRSF006625">
    <property type="entry name" value="KduI"/>
    <property type="match status" value="1"/>
</dbReference>
<dbReference type="SUPFAM" id="SSF51182">
    <property type="entry name" value="RmlC-like cupins"/>
    <property type="match status" value="1"/>
</dbReference>
<sequence length="278" mass="31076">MDVRQSIHSAHAKTLDTQGLRNEFLVEKVFVADEYTMVYSHIDRIIVGGIMPVTKTVSVGGEVGKQLGVSYFLERRELGVINIGGAGTITVDGQCYEIGHRDALYVGKGAKEVVFASIDTATPAKFYYNCAPAHTTYPTKKVTPDEVSPVTLGDNLTSNRRTINKYFVPDVLETCQLSMGLTELAPGNLWNTMPCHTHERRMEVYFYFNMDDDACVFHMMGQPQETRHIVMHNEQAVISPSWSIHSGVGTKAYTFIWGMVGENQVFDDMDHVAVKDLR</sequence>
<feature type="chain" id="PRO_1000045082" description="4-deoxy-L-threo-5-hexosulose-uronate ketol-isomerase">
    <location>
        <begin position="1"/>
        <end position="278"/>
    </location>
</feature>
<feature type="binding site" evidence="1">
    <location>
        <position position="196"/>
    </location>
    <ligand>
        <name>Zn(2+)</name>
        <dbReference type="ChEBI" id="CHEBI:29105"/>
    </ligand>
</feature>
<feature type="binding site" evidence="1">
    <location>
        <position position="198"/>
    </location>
    <ligand>
        <name>Zn(2+)</name>
        <dbReference type="ChEBI" id="CHEBI:29105"/>
    </ligand>
</feature>
<feature type="binding site" evidence="1">
    <location>
        <position position="203"/>
    </location>
    <ligand>
        <name>Zn(2+)</name>
        <dbReference type="ChEBI" id="CHEBI:29105"/>
    </ligand>
</feature>
<feature type="binding site" evidence="1">
    <location>
        <position position="245"/>
    </location>
    <ligand>
        <name>Zn(2+)</name>
        <dbReference type="ChEBI" id="CHEBI:29105"/>
    </ligand>
</feature>
<gene>
    <name evidence="1" type="primary">kduI</name>
    <name type="ordered locus">ECP_2856</name>
</gene>
<protein>
    <recommendedName>
        <fullName evidence="1">4-deoxy-L-threo-5-hexosulose-uronate ketol-isomerase</fullName>
        <ecNumber evidence="1">5.3.1.17</ecNumber>
    </recommendedName>
    <alternativeName>
        <fullName evidence="1">5-keto-4-deoxyuronate isomerase</fullName>
    </alternativeName>
    <alternativeName>
        <fullName evidence="1">DKI isomerase</fullName>
    </alternativeName>
</protein>
<comment type="function">
    <text evidence="1">Catalyzes the isomerization of 5-dehydro-4-deoxy-D-glucuronate to 3-deoxy-D-glycero-2,5-hexodiulosonate.</text>
</comment>
<comment type="catalytic activity">
    <reaction evidence="1">
        <text>5-dehydro-4-deoxy-D-glucuronate = 3-deoxy-D-glycero-2,5-hexodiulosonate</text>
        <dbReference type="Rhea" id="RHEA:23896"/>
        <dbReference type="ChEBI" id="CHEBI:17117"/>
        <dbReference type="ChEBI" id="CHEBI:29071"/>
        <dbReference type="EC" id="5.3.1.17"/>
    </reaction>
</comment>
<comment type="cofactor">
    <cofactor evidence="1">
        <name>Zn(2+)</name>
        <dbReference type="ChEBI" id="CHEBI:29105"/>
    </cofactor>
    <text evidence="1">Binds 1 zinc ion per subunit.</text>
</comment>
<comment type="pathway">
    <text evidence="1">Glycan metabolism; pectin degradation; 2-dehydro-3-deoxy-D-gluconate from pectin: step 4/5.</text>
</comment>
<comment type="subunit">
    <text evidence="1">Homohexamer.</text>
</comment>
<comment type="similarity">
    <text evidence="1">Belongs to the KduI family.</text>
</comment>
<proteinExistence type="inferred from homology"/>
<keyword id="KW-0413">Isomerase</keyword>
<keyword id="KW-0479">Metal-binding</keyword>
<keyword id="KW-0862">Zinc</keyword>
<evidence type="ECO:0000255" key="1">
    <source>
        <dbReference type="HAMAP-Rule" id="MF_00687"/>
    </source>
</evidence>
<organism>
    <name type="scientific">Escherichia coli O6:K15:H31 (strain 536 / UPEC)</name>
    <dbReference type="NCBI Taxonomy" id="362663"/>
    <lineage>
        <taxon>Bacteria</taxon>
        <taxon>Pseudomonadati</taxon>
        <taxon>Pseudomonadota</taxon>
        <taxon>Gammaproteobacteria</taxon>
        <taxon>Enterobacterales</taxon>
        <taxon>Enterobacteriaceae</taxon>
        <taxon>Escherichia</taxon>
    </lineage>
</organism>
<name>KDUI_ECOL5</name>
<reference key="1">
    <citation type="journal article" date="2006" name="Mol. Microbiol.">
        <title>Role of pathogenicity island-associated integrases in the genome plasticity of uropathogenic Escherichia coli strain 536.</title>
        <authorList>
            <person name="Hochhut B."/>
            <person name="Wilde C."/>
            <person name="Balling G."/>
            <person name="Middendorf B."/>
            <person name="Dobrindt U."/>
            <person name="Brzuszkiewicz E."/>
            <person name="Gottschalk G."/>
            <person name="Carniel E."/>
            <person name="Hacker J."/>
        </authorList>
    </citation>
    <scope>NUCLEOTIDE SEQUENCE [LARGE SCALE GENOMIC DNA]</scope>
    <source>
        <strain>536 / UPEC</strain>
    </source>
</reference>
<accession>Q0TDY9</accession>